<keyword id="KW-0963">Cytoplasm</keyword>
<keyword id="KW-0238">DNA-binding</keyword>
<dbReference type="EMBL" id="CP001020">
    <property type="protein sequence ID" value="ACJ20754.1"/>
    <property type="molecule type" value="Genomic_DNA"/>
</dbReference>
<dbReference type="RefSeq" id="WP_005771886.1">
    <property type="nucleotide sequence ID" value="NC_011528.1"/>
</dbReference>
<dbReference type="SMR" id="B6J938"/>
<dbReference type="KEGG" id="cbc:CbuK_1603"/>
<dbReference type="HOGENOM" id="CLU_140930_0_0_6"/>
<dbReference type="GO" id="GO:0043590">
    <property type="term" value="C:bacterial nucleoid"/>
    <property type="evidence" value="ECO:0007669"/>
    <property type="project" value="UniProtKB-UniRule"/>
</dbReference>
<dbReference type="GO" id="GO:0005829">
    <property type="term" value="C:cytosol"/>
    <property type="evidence" value="ECO:0007669"/>
    <property type="project" value="TreeGrafter"/>
</dbReference>
<dbReference type="GO" id="GO:0003677">
    <property type="term" value="F:DNA binding"/>
    <property type="evidence" value="ECO:0007669"/>
    <property type="project" value="UniProtKB-UniRule"/>
</dbReference>
<dbReference type="Gene3D" id="3.30.1310.10">
    <property type="entry name" value="Nucleoid-associated protein YbaB-like domain"/>
    <property type="match status" value="1"/>
</dbReference>
<dbReference type="HAMAP" id="MF_00274">
    <property type="entry name" value="DNA_YbaB_EbfC"/>
    <property type="match status" value="1"/>
</dbReference>
<dbReference type="InterPro" id="IPR036894">
    <property type="entry name" value="YbaB-like_sf"/>
</dbReference>
<dbReference type="InterPro" id="IPR004401">
    <property type="entry name" value="YbaB/EbfC"/>
</dbReference>
<dbReference type="NCBIfam" id="TIGR00103">
    <property type="entry name" value="DNA_YbaB_EbfC"/>
    <property type="match status" value="1"/>
</dbReference>
<dbReference type="PANTHER" id="PTHR33449">
    <property type="entry name" value="NUCLEOID-ASSOCIATED PROTEIN YBAB"/>
    <property type="match status" value="1"/>
</dbReference>
<dbReference type="PANTHER" id="PTHR33449:SF1">
    <property type="entry name" value="NUCLEOID-ASSOCIATED PROTEIN YBAB"/>
    <property type="match status" value="1"/>
</dbReference>
<dbReference type="Pfam" id="PF02575">
    <property type="entry name" value="YbaB_DNA_bd"/>
    <property type="match status" value="1"/>
</dbReference>
<dbReference type="PIRSF" id="PIRSF004555">
    <property type="entry name" value="UCP004555"/>
    <property type="match status" value="1"/>
</dbReference>
<dbReference type="SUPFAM" id="SSF82607">
    <property type="entry name" value="YbaB-like"/>
    <property type="match status" value="1"/>
</dbReference>
<reference key="1">
    <citation type="journal article" date="2009" name="Infect. Immun.">
        <title>Comparative genomics reveal extensive transposon-mediated genomic plasticity and diversity among potential effector proteins within the genus Coxiella.</title>
        <authorList>
            <person name="Beare P.A."/>
            <person name="Unsworth N."/>
            <person name="Andoh M."/>
            <person name="Voth D.E."/>
            <person name="Omsland A."/>
            <person name="Gilk S.D."/>
            <person name="Williams K.P."/>
            <person name="Sobral B.W."/>
            <person name="Kupko J.J. III"/>
            <person name="Porcella S.F."/>
            <person name="Samuel J.E."/>
            <person name="Heinzen R.A."/>
        </authorList>
    </citation>
    <scope>NUCLEOTIDE SEQUENCE [LARGE SCALE GENOMIC DNA]</scope>
    <source>
        <strain>CbuK_Q154</strain>
    </source>
</reference>
<sequence length="110" mass="12103">MIGGKFNLGSLMKNAKKIQEMMQKAQDELAKIRVTGESGAGMVKLTMTAQHEVVEMNLDDELLKESKEVIEDLIKAALNDANQKILKITQEKMMSAGSLFGGNESDNEET</sequence>
<evidence type="ECO:0000255" key="1">
    <source>
        <dbReference type="HAMAP-Rule" id="MF_00274"/>
    </source>
</evidence>
<protein>
    <recommendedName>
        <fullName evidence="1">Nucleoid-associated protein CbuK_1603</fullName>
    </recommendedName>
</protein>
<comment type="function">
    <text evidence="1">Binds to DNA and alters its conformation. May be involved in regulation of gene expression, nucleoid organization and DNA protection.</text>
</comment>
<comment type="subunit">
    <text evidence="1">Homodimer.</text>
</comment>
<comment type="subcellular location">
    <subcellularLocation>
        <location evidence="1">Cytoplasm</location>
        <location evidence="1">Nucleoid</location>
    </subcellularLocation>
</comment>
<comment type="similarity">
    <text evidence="1">Belongs to the YbaB/EbfC family.</text>
</comment>
<gene>
    <name type="ordered locus">CbuK_1603</name>
</gene>
<proteinExistence type="inferred from homology"/>
<feature type="chain" id="PRO_1000114607" description="Nucleoid-associated protein CbuK_1603">
    <location>
        <begin position="1"/>
        <end position="110"/>
    </location>
</feature>
<accession>B6J938</accession>
<organism>
    <name type="scientific">Coxiella burnetii (strain CbuK_Q154)</name>
    <name type="common">Coxiella burnetii (strain Q154)</name>
    <dbReference type="NCBI Taxonomy" id="434924"/>
    <lineage>
        <taxon>Bacteria</taxon>
        <taxon>Pseudomonadati</taxon>
        <taxon>Pseudomonadota</taxon>
        <taxon>Gammaproteobacteria</taxon>
        <taxon>Legionellales</taxon>
        <taxon>Coxiellaceae</taxon>
        <taxon>Coxiella</taxon>
    </lineage>
</organism>
<name>Y1603_COXB1</name>